<organism>
    <name type="scientific">Crotalus durissus terrificus</name>
    <name type="common">South American rattlesnake</name>
    <dbReference type="NCBI Taxonomy" id="8732"/>
    <lineage>
        <taxon>Eukaryota</taxon>
        <taxon>Metazoa</taxon>
        <taxon>Chordata</taxon>
        <taxon>Craniata</taxon>
        <taxon>Vertebrata</taxon>
        <taxon>Euteleostomi</taxon>
        <taxon>Lepidosauria</taxon>
        <taxon>Squamata</taxon>
        <taxon>Bifurcata</taxon>
        <taxon>Unidentata</taxon>
        <taxon>Episquamata</taxon>
        <taxon>Toxicofera</taxon>
        <taxon>Serpentes</taxon>
        <taxon>Colubroidea</taxon>
        <taxon>Viperidae</taxon>
        <taxon>Crotalinae</taxon>
        <taxon>Crotalus</taxon>
    </lineage>
</organism>
<feature type="chain" id="PRO_0000418570" description="Phospholipase A2 crotoxin basic chain 3">
    <location>
        <begin position="1"/>
        <end position="23" status="greater than"/>
    </location>
</feature>
<feature type="non-terminal residue">
    <location>
        <position position="23"/>
    </location>
</feature>
<dbReference type="EC" id="3.1.1.4"/>
<dbReference type="GO" id="GO:0005576">
    <property type="term" value="C:extracellular region"/>
    <property type="evidence" value="ECO:0007669"/>
    <property type="project" value="UniProtKB-SubCell"/>
</dbReference>
<dbReference type="GO" id="GO:0046872">
    <property type="term" value="F:metal ion binding"/>
    <property type="evidence" value="ECO:0007669"/>
    <property type="project" value="UniProtKB-KW"/>
</dbReference>
<dbReference type="GO" id="GO:0004623">
    <property type="term" value="F:phospholipase A2 activity"/>
    <property type="evidence" value="ECO:0007669"/>
    <property type="project" value="UniProtKB-EC"/>
</dbReference>
<dbReference type="GO" id="GO:0090729">
    <property type="term" value="F:toxin activity"/>
    <property type="evidence" value="ECO:0007669"/>
    <property type="project" value="UniProtKB-KW"/>
</dbReference>
<dbReference type="GO" id="GO:0016042">
    <property type="term" value="P:lipid catabolic process"/>
    <property type="evidence" value="ECO:0007669"/>
    <property type="project" value="UniProtKB-KW"/>
</dbReference>
<comment type="function">
    <text evidence="2">Snake venom phospholipase A2 (PLA2) that shows presynaptic neurotoxicity. PLA2 catalyzes the calcium-dependent hydrolysis of the 2-acyl groups in 3-sn-phosphoglycerides.</text>
</comment>
<comment type="catalytic activity">
    <reaction>
        <text>a 1,2-diacyl-sn-glycero-3-phosphocholine + H2O = a 1-acyl-sn-glycero-3-phosphocholine + a fatty acid + H(+)</text>
        <dbReference type="Rhea" id="RHEA:15801"/>
        <dbReference type="ChEBI" id="CHEBI:15377"/>
        <dbReference type="ChEBI" id="CHEBI:15378"/>
        <dbReference type="ChEBI" id="CHEBI:28868"/>
        <dbReference type="ChEBI" id="CHEBI:57643"/>
        <dbReference type="ChEBI" id="CHEBI:58168"/>
        <dbReference type="EC" id="3.1.1.4"/>
    </reaction>
</comment>
<comment type="cofactor">
    <cofactor evidence="1">
        <name>Ca(2+)</name>
        <dbReference type="ChEBI" id="CHEBI:29108"/>
    </cofactor>
    <text evidence="1">Binds 1 Ca(2+) ion.</text>
</comment>
<comment type="biophysicochemical properties">
    <kinetics>
        <Vmax evidence="2">672.0 umol/min/mg enzyme with DPPC + deoxycholate as substrate (at pH 7.4 and 37 degrees Celsius)</Vmax>
        <Vmax evidence="2">231.0 umol/min/mg enzyme with DPPC + Triton X-100 as substrate (at pH 7.4 and 37 degrees Celsius)</Vmax>
        <text>When tested as a monomer.</text>
    </kinetics>
</comment>
<comment type="subcellular location">
    <subcellularLocation>
        <location>Secreted</location>
    </subcellularLocation>
</comment>
<comment type="tissue specificity">
    <text>Expressed by the venom gland.</text>
</comment>
<comment type="PTM">
    <text evidence="1">Contains 7 disulfide bonds.</text>
</comment>
<comment type="mass spectrometry"/>
<comment type="similarity">
    <text evidence="3">Belongs to the phospholipase A2 family. Group II subfamily.</text>
</comment>
<keyword id="KW-0106">Calcium</keyword>
<keyword id="KW-0903">Direct protein sequencing</keyword>
<keyword id="KW-1015">Disulfide bond</keyword>
<keyword id="KW-0378">Hydrolase</keyword>
<keyword id="KW-0442">Lipid degradation</keyword>
<keyword id="KW-0443">Lipid metabolism</keyword>
<keyword id="KW-0479">Metal-binding</keyword>
<keyword id="KW-0528">Neurotoxin</keyword>
<keyword id="KW-0638">Presynaptic neurotoxin</keyword>
<keyword id="KW-0964">Secreted</keyword>
<keyword id="KW-0800">Toxin</keyword>
<proteinExistence type="evidence at protein level"/>
<accession>P0DJN5</accession>
<protein>
    <recommendedName>
        <fullName>Phospholipase A2 crotoxin basic chain 3</fullName>
        <shortName>CB3</shortName>
        <shortName>svPLA2</shortName>
        <ecNumber>3.1.1.4</ecNumber>
    </recommendedName>
    <alternativeName>
        <fullName>Phosphatidylcholine 2-acylhydrolase</fullName>
    </alternativeName>
</protein>
<sequence>HLLQFNKMIKFETGKNAIPFYAF</sequence>
<name>PA2B3_CRODU</name>
<evidence type="ECO:0000250" key="1"/>
<evidence type="ECO:0000269" key="2">
    <source>
    </source>
</evidence>
<evidence type="ECO:0000305" key="3"/>
<reference key="1">
    <citation type="journal article" date="2004" name="Biochem. J.">
        <title>Molecular evolution and structure-function relationships of crotoxin-like and asparagine-6-containing phospholipases A2 in pit viper venoms.</title>
        <authorList>
            <person name="Chen Y.-H."/>
            <person name="Wang Y.-M."/>
            <person name="Hseu M.-J."/>
            <person name="Tsai I.-H."/>
        </authorList>
    </citation>
    <scope>PROTEIN SEQUENCE</scope>
    <scope>FUNCTION</scope>
    <scope>BIOPHYSICOCHEMICAL PROPERTIES</scope>
    <scope>MASS SPECTROMETRY</scope>
    <source>
        <tissue>Venom</tissue>
    </source>
</reference>